<comment type="function">
    <text evidence="1">Together with the chaperonin GroEL, plays an essential role in assisting protein folding. The GroEL-GroES system forms a nano-cage that allows encapsulation of the non-native substrate proteins and provides a physical environment optimized to promote and accelerate protein folding. GroES binds to the apical surface of the GroEL ring, thereby capping the opening of the GroEL channel.</text>
</comment>
<comment type="subunit">
    <text evidence="1">Heptamer of 7 subunits arranged in a ring. Interacts with the chaperonin GroEL.</text>
</comment>
<comment type="subcellular location">
    <subcellularLocation>
        <location evidence="1">Cytoplasm</location>
    </subcellularLocation>
</comment>
<comment type="similarity">
    <text evidence="1">Belongs to the GroES chaperonin family.</text>
</comment>
<dbReference type="EMBL" id="CP000915">
    <property type="protein sequence ID" value="ACD30312.1"/>
    <property type="molecule type" value="Genomic_DNA"/>
</dbReference>
<dbReference type="SMR" id="B2SFF9"/>
<dbReference type="KEGG" id="ftm:FTM_0236"/>
<dbReference type="HOGENOM" id="CLU_132825_2_0_6"/>
<dbReference type="GO" id="GO:0005737">
    <property type="term" value="C:cytoplasm"/>
    <property type="evidence" value="ECO:0007669"/>
    <property type="project" value="UniProtKB-SubCell"/>
</dbReference>
<dbReference type="GO" id="GO:0005524">
    <property type="term" value="F:ATP binding"/>
    <property type="evidence" value="ECO:0007669"/>
    <property type="project" value="InterPro"/>
</dbReference>
<dbReference type="GO" id="GO:0046872">
    <property type="term" value="F:metal ion binding"/>
    <property type="evidence" value="ECO:0007669"/>
    <property type="project" value="TreeGrafter"/>
</dbReference>
<dbReference type="GO" id="GO:0044183">
    <property type="term" value="F:protein folding chaperone"/>
    <property type="evidence" value="ECO:0007669"/>
    <property type="project" value="InterPro"/>
</dbReference>
<dbReference type="GO" id="GO:0051087">
    <property type="term" value="F:protein-folding chaperone binding"/>
    <property type="evidence" value="ECO:0007669"/>
    <property type="project" value="TreeGrafter"/>
</dbReference>
<dbReference type="GO" id="GO:0051082">
    <property type="term" value="F:unfolded protein binding"/>
    <property type="evidence" value="ECO:0007669"/>
    <property type="project" value="TreeGrafter"/>
</dbReference>
<dbReference type="GO" id="GO:0051085">
    <property type="term" value="P:chaperone cofactor-dependent protein refolding"/>
    <property type="evidence" value="ECO:0007669"/>
    <property type="project" value="TreeGrafter"/>
</dbReference>
<dbReference type="CDD" id="cd00320">
    <property type="entry name" value="cpn10"/>
    <property type="match status" value="1"/>
</dbReference>
<dbReference type="FunFam" id="2.30.33.40:FF:000001">
    <property type="entry name" value="10 kDa chaperonin"/>
    <property type="match status" value="1"/>
</dbReference>
<dbReference type="Gene3D" id="2.30.33.40">
    <property type="entry name" value="GroES chaperonin"/>
    <property type="match status" value="1"/>
</dbReference>
<dbReference type="HAMAP" id="MF_00580">
    <property type="entry name" value="CH10"/>
    <property type="match status" value="1"/>
</dbReference>
<dbReference type="InterPro" id="IPR020818">
    <property type="entry name" value="Chaperonin_GroES"/>
</dbReference>
<dbReference type="InterPro" id="IPR037124">
    <property type="entry name" value="Chaperonin_GroES_sf"/>
</dbReference>
<dbReference type="InterPro" id="IPR018369">
    <property type="entry name" value="Chaprnonin_Cpn10_CS"/>
</dbReference>
<dbReference type="InterPro" id="IPR011032">
    <property type="entry name" value="GroES-like_sf"/>
</dbReference>
<dbReference type="NCBIfam" id="NF001527">
    <property type="entry name" value="PRK00364.1-2"/>
    <property type="match status" value="1"/>
</dbReference>
<dbReference type="NCBIfam" id="NF001531">
    <property type="entry name" value="PRK00364.2-2"/>
    <property type="match status" value="1"/>
</dbReference>
<dbReference type="NCBIfam" id="NF001533">
    <property type="entry name" value="PRK00364.2-4"/>
    <property type="match status" value="1"/>
</dbReference>
<dbReference type="PANTHER" id="PTHR10772">
    <property type="entry name" value="10 KDA HEAT SHOCK PROTEIN"/>
    <property type="match status" value="1"/>
</dbReference>
<dbReference type="PANTHER" id="PTHR10772:SF58">
    <property type="entry name" value="CO-CHAPERONIN GROES"/>
    <property type="match status" value="1"/>
</dbReference>
<dbReference type="Pfam" id="PF00166">
    <property type="entry name" value="Cpn10"/>
    <property type="match status" value="1"/>
</dbReference>
<dbReference type="PRINTS" id="PR00297">
    <property type="entry name" value="CHAPERONIN10"/>
</dbReference>
<dbReference type="SMART" id="SM00883">
    <property type="entry name" value="Cpn10"/>
    <property type="match status" value="1"/>
</dbReference>
<dbReference type="SUPFAM" id="SSF50129">
    <property type="entry name" value="GroES-like"/>
    <property type="match status" value="1"/>
</dbReference>
<dbReference type="PROSITE" id="PS00681">
    <property type="entry name" value="CHAPERONINS_CPN10"/>
    <property type="match status" value="1"/>
</dbReference>
<sequence length="95" mass="10245">MNIRPLQDRVLVRRAEEEKKSAGGIILTGSAQEKPSQGEVVAVGNGKKLDNGTTLPMDVKVGDKVLFGKYSGSEVKVGDETLLMMREEDIMGIIA</sequence>
<accession>B2SFF9</accession>
<feature type="chain" id="PRO_1000129664" description="Co-chaperonin GroES">
    <location>
        <begin position="1"/>
        <end position="95"/>
    </location>
</feature>
<name>CH10_FRATM</name>
<protein>
    <recommendedName>
        <fullName evidence="1">Co-chaperonin GroES</fullName>
    </recommendedName>
    <alternativeName>
        <fullName evidence="1">10 kDa chaperonin</fullName>
    </alternativeName>
    <alternativeName>
        <fullName evidence="1">Chaperonin-10</fullName>
        <shortName evidence="1">Cpn10</shortName>
    </alternativeName>
</protein>
<evidence type="ECO:0000255" key="1">
    <source>
        <dbReference type="HAMAP-Rule" id="MF_00580"/>
    </source>
</evidence>
<reference key="1">
    <citation type="journal article" date="2009" name="PLoS Pathog.">
        <title>Molecular evolutionary consequences of niche restriction in Francisella tularensis, a facultative intracellular pathogen.</title>
        <authorList>
            <person name="Larsson P."/>
            <person name="Elfsmark D."/>
            <person name="Svensson K."/>
            <person name="Wikstroem P."/>
            <person name="Forsman M."/>
            <person name="Brettin T."/>
            <person name="Keim P."/>
            <person name="Johansson A."/>
        </authorList>
    </citation>
    <scope>NUCLEOTIDE SEQUENCE [LARGE SCALE GENOMIC DNA]</scope>
    <source>
        <strain>FSC147</strain>
    </source>
</reference>
<proteinExistence type="inferred from homology"/>
<organism>
    <name type="scientific">Francisella tularensis subsp. mediasiatica (strain FSC147)</name>
    <dbReference type="NCBI Taxonomy" id="441952"/>
    <lineage>
        <taxon>Bacteria</taxon>
        <taxon>Pseudomonadati</taxon>
        <taxon>Pseudomonadota</taxon>
        <taxon>Gammaproteobacteria</taxon>
        <taxon>Thiotrichales</taxon>
        <taxon>Francisellaceae</taxon>
        <taxon>Francisella</taxon>
    </lineage>
</organism>
<keyword id="KW-0143">Chaperone</keyword>
<keyword id="KW-0963">Cytoplasm</keyword>
<gene>
    <name evidence="1" type="primary">groES</name>
    <name evidence="1" type="synonym">groS</name>
    <name type="ordered locus">FTM_0236</name>
</gene>